<accession>C1DJC9</accession>
<name>HIS7_AZOVD</name>
<protein>
    <recommendedName>
        <fullName evidence="1">Imidazoleglycerol-phosphate dehydratase</fullName>
        <shortName evidence="1">IGPD</shortName>
        <ecNumber evidence="1">4.2.1.19</ecNumber>
    </recommendedName>
</protein>
<sequence>MAERTACVERNTLETRIKVSVNLDGTGKTRFATGVPFFEHMLDQIARHGLIDLDIECQGDLHIDDHHTVEDVGITLGQAFARAIGDKKGIVRYGHSYVPLDEALSRVVVDFSGRPGLSMQVPYTRARVGSFDVDLFQEFFQGFVNHAQVTLHIDNLRGSNTHHQIETVFKAFGRALRMAVEPDPRMVGQTPSTKGCL</sequence>
<reference key="1">
    <citation type="journal article" date="2009" name="J. Bacteriol.">
        <title>Genome sequence of Azotobacter vinelandii, an obligate aerobe specialized to support diverse anaerobic metabolic processes.</title>
        <authorList>
            <person name="Setubal J.C."/>
            <person name="Dos Santos P."/>
            <person name="Goldman B.S."/>
            <person name="Ertesvaag H."/>
            <person name="Espin G."/>
            <person name="Rubio L.M."/>
            <person name="Valla S."/>
            <person name="Almeida N.F."/>
            <person name="Balasubramanian D."/>
            <person name="Cromes L."/>
            <person name="Curatti L."/>
            <person name="Du Z."/>
            <person name="Godsy E."/>
            <person name="Goodner B."/>
            <person name="Hellner-Burris K."/>
            <person name="Hernandez J.A."/>
            <person name="Houmiel K."/>
            <person name="Imperial J."/>
            <person name="Kennedy C."/>
            <person name="Larson T.J."/>
            <person name="Latreille P."/>
            <person name="Ligon L.S."/>
            <person name="Lu J."/>
            <person name="Maerk M."/>
            <person name="Miller N.M."/>
            <person name="Norton S."/>
            <person name="O'Carroll I.P."/>
            <person name="Paulsen I."/>
            <person name="Raulfs E.C."/>
            <person name="Roemer R."/>
            <person name="Rosser J."/>
            <person name="Segura D."/>
            <person name="Slater S."/>
            <person name="Stricklin S.L."/>
            <person name="Studholme D.J."/>
            <person name="Sun J."/>
            <person name="Viana C.J."/>
            <person name="Wallin E."/>
            <person name="Wang B."/>
            <person name="Wheeler C."/>
            <person name="Zhu H."/>
            <person name="Dean D.R."/>
            <person name="Dixon R."/>
            <person name="Wood D."/>
        </authorList>
    </citation>
    <scope>NUCLEOTIDE SEQUENCE [LARGE SCALE GENOMIC DNA]</scope>
    <source>
        <strain>DJ / ATCC BAA-1303</strain>
    </source>
</reference>
<feature type="chain" id="PRO_1000202507" description="Imidazoleglycerol-phosphate dehydratase">
    <location>
        <begin position="1"/>
        <end position="197"/>
    </location>
</feature>
<evidence type="ECO:0000255" key="1">
    <source>
        <dbReference type="HAMAP-Rule" id="MF_00076"/>
    </source>
</evidence>
<comment type="catalytic activity">
    <reaction evidence="1">
        <text>D-erythro-1-(imidazol-4-yl)glycerol 3-phosphate = 3-(imidazol-4-yl)-2-oxopropyl phosphate + H2O</text>
        <dbReference type="Rhea" id="RHEA:11040"/>
        <dbReference type="ChEBI" id="CHEBI:15377"/>
        <dbReference type="ChEBI" id="CHEBI:57766"/>
        <dbReference type="ChEBI" id="CHEBI:58278"/>
        <dbReference type="EC" id="4.2.1.19"/>
    </reaction>
</comment>
<comment type="pathway">
    <text evidence="1">Amino-acid biosynthesis; L-histidine biosynthesis; L-histidine from 5-phospho-alpha-D-ribose 1-diphosphate: step 6/9.</text>
</comment>
<comment type="subcellular location">
    <subcellularLocation>
        <location evidence="1">Cytoplasm</location>
    </subcellularLocation>
</comment>
<comment type="similarity">
    <text evidence="1">Belongs to the imidazoleglycerol-phosphate dehydratase family.</text>
</comment>
<proteinExistence type="inferred from homology"/>
<gene>
    <name evidence="1" type="primary">hisB</name>
    <name type="ordered locus">Avin_04590</name>
</gene>
<organism>
    <name type="scientific">Azotobacter vinelandii (strain DJ / ATCC BAA-1303)</name>
    <dbReference type="NCBI Taxonomy" id="322710"/>
    <lineage>
        <taxon>Bacteria</taxon>
        <taxon>Pseudomonadati</taxon>
        <taxon>Pseudomonadota</taxon>
        <taxon>Gammaproteobacteria</taxon>
        <taxon>Pseudomonadales</taxon>
        <taxon>Pseudomonadaceae</taxon>
        <taxon>Azotobacter</taxon>
    </lineage>
</organism>
<keyword id="KW-0028">Amino-acid biosynthesis</keyword>
<keyword id="KW-0963">Cytoplasm</keyword>
<keyword id="KW-0368">Histidine biosynthesis</keyword>
<keyword id="KW-0456">Lyase</keyword>
<dbReference type="EC" id="4.2.1.19" evidence="1"/>
<dbReference type="EMBL" id="CP001157">
    <property type="protein sequence ID" value="ACO76714.1"/>
    <property type="molecule type" value="Genomic_DNA"/>
</dbReference>
<dbReference type="RefSeq" id="WP_012699142.1">
    <property type="nucleotide sequence ID" value="NC_012560.1"/>
</dbReference>
<dbReference type="SMR" id="C1DJC9"/>
<dbReference type="STRING" id="322710.Avin_04590"/>
<dbReference type="EnsemblBacteria" id="ACO76714">
    <property type="protein sequence ID" value="ACO76714"/>
    <property type="gene ID" value="Avin_04590"/>
</dbReference>
<dbReference type="GeneID" id="88183889"/>
<dbReference type="KEGG" id="avn:Avin_04590"/>
<dbReference type="eggNOG" id="COG0131">
    <property type="taxonomic scope" value="Bacteria"/>
</dbReference>
<dbReference type="HOGENOM" id="CLU_044308_3_0_6"/>
<dbReference type="OrthoDB" id="9790411at2"/>
<dbReference type="UniPathway" id="UPA00031">
    <property type="reaction ID" value="UER00011"/>
</dbReference>
<dbReference type="Proteomes" id="UP000002424">
    <property type="component" value="Chromosome"/>
</dbReference>
<dbReference type="GO" id="GO:0005737">
    <property type="term" value="C:cytoplasm"/>
    <property type="evidence" value="ECO:0007669"/>
    <property type="project" value="UniProtKB-SubCell"/>
</dbReference>
<dbReference type="GO" id="GO:0004424">
    <property type="term" value="F:imidazoleglycerol-phosphate dehydratase activity"/>
    <property type="evidence" value="ECO:0007669"/>
    <property type="project" value="UniProtKB-UniRule"/>
</dbReference>
<dbReference type="GO" id="GO:0000105">
    <property type="term" value="P:L-histidine biosynthetic process"/>
    <property type="evidence" value="ECO:0007669"/>
    <property type="project" value="UniProtKB-UniRule"/>
</dbReference>
<dbReference type="CDD" id="cd07914">
    <property type="entry name" value="IGPD"/>
    <property type="match status" value="1"/>
</dbReference>
<dbReference type="FunFam" id="3.30.230.40:FF:000002">
    <property type="entry name" value="Imidazoleglycerol-phosphate dehydratase"/>
    <property type="match status" value="1"/>
</dbReference>
<dbReference type="FunFam" id="3.30.230.40:FF:000003">
    <property type="entry name" value="Imidazoleglycerol-phosphate dehydratase HisB"/>
    <property type="match status" value="1"/>
</dbReference>
<dbReference type="Gene3D" id="3.30.230.40">
    <property type="entry name" value="Imidazole glycerol phosphate dehydratase, domain 1"/>
    <property type="match status" value="2"/>
</dbReference>
<dbReference type="HAMAP" id="MF_00076">
    <property type="entry name" value="HisB"/>
    <property type="match status" value="1"/>
</dbReference>
<dbReference type="InterPro" id="IPR038494">
    <property type="entry name" value="IGPD_sf"/>
</dbReference>
<dbReference type="InterPro" id="IPR000807">
    <property type="entry name" value="ImidazoleglycerolP_deHydtase"/>
</dbReference>
<dbReference type="InterPro" id="IPR020565">
    <property type="entry name" value="ImidazoleglycerP_deHydtase_CS"/>
</dbReference>
<dbReference type="InterPro" id="IPR020568">
    <property type="entry name" value="Ribosomal_Su5_D2-typ_SF"/>
</dbReference>
<dbReference type="NCBIfam" id="NF002106">
    <property type="entry name" value="PRK00951.1-1"/>
    <property type="match status" value="1"/>
</dbReference>
<dbReference type="NCBIfam" id="NF002109">
    <property type="entry name" value="PRK00951.1-5"/>
    <property type="match status" value="1"/>
</dbReference>
<dbReference type="NCBIfam" id="NF002111">
    <property type="entry name" value="PRK00951.2-1"/>
    <property type="match status" value="1"/>
</dbReference>
<dbReference type="NCBIfam" id="NF002114">
    <property type="entry name" value="PRK00951.2-4"/>
    <property type="match status" value="1"/>
</dbReference>
<dbReference type="PANTHER" id="PTHR23133:SF2">
    <property type="entry name" value="IMIDAZOLEGLYCEROL-PHOSPHATE DEHYDRATASE"/>
    <property type="match status" value="1"/>
</dbReference>
<dbReference type="PANTHER" id="PTHR23133">
    <property type="entry name" value="IMIDAZOLEGLYCEROL-PHOSPHATE DEHYDRATASE HIS7"/>
    <property type="match status" value="1"/>
</dbReference>
<dbReference type="Pfam" id="PF00475">
    <property type="entry name" value="IGPD"/>
    <property type="match status" value="1"/>
</dbReference>
<dbReference type="SUPFAM" id="SSF54211">
    <property type="entry name" value="Ribosomal protein S5 domain 2-like"/>
    <property type="match status" value="2"/>
</dbReference>
<dbReference type="PROSITE" id="PS00954">
    <property type="entry name" value="IGP_DEHYDRATASE_1"/>
    <property type="match status" value="1"/>
</dbReference>
<dbReference type="PROSITE" id="PS00955">
    <property type="entry name" value="IGP_DEHYDRATASE_2"/>
    <property type="match status" value="1"/>
</dbReference>